<keyword id="KW-1185">Reference proteome</keyword>
<protein>
    <recommendedName>
        <fullName evidence="1">UPF0301 protein BDI_1431</fullName>
    </recommendedName>
</protein>
<sequence>MASYKNIFKITHNDVLPIQGSILIAEPFLQDAYFQRSVVLLIEHTEHGSMGFVLNKKTDLIVNSFFKEFAEFPEIPIYLGGPVSPNRLFFIHSLGDNIIPDALKINDYLYFDGDFNALKRYILNGHPIDGKVKFFLGYSGWTEGQLNHEIKRNSWAVSHITTDNILSADGEGYWKDSVELLGNDYKTWTKYPKDPYLN</sequence>
<proteinExistence type="inferred from homology"/>
<comment type="similarity">
    <text evidence="1">Belongs to the UPF0301 (AlgH) family.</text>
</comment>
<accession>A6LBX4</accession>
<gene>
    <name type="ordered locus">BDI_1431</name>
</gene>
<feature type="chain" id="PRO_1000046669" description="UPF0301 protein BDI_1431">
    <location>
        <begin position="1"/>
        <end position="198"/>
    </location>
</feature>
<evidence type="ECO:0000255" key="1">
    <source>
        <dbReference type="HAMAP-Rule" id="MF_00758"/>
    </source>
</evidence>
<name>Y1431_PARD8</name>
<organism>
    <name type="scientific">Parabacteroides distasonis (strain ATCC 8503 / DSM 20701 / CIP 104284 / JCM 5825 / NCTC 11152)</name>
    <dbReference type="NCBI Taxonomy" id="435591"/>
    <lineage>
        <taxon>Bacteria</taxon>
        <taxon>Pseudomonadati</taxon>
        <taxon>Bacteroidota</taxon>
        <taxon>Bacteroidia</taxon>
        <taxon>Bacteroidales</taxon>
        <taxon>Tannerellaceae</taxon>
        <taxon>Parabacteroides</taxon>
    </lineage>
</organism>
<reference key="1">
    <citation type="journal article" date="2007" name="PLoS Biol.">
        <title>Evolution of symbiotic bacteria in the distal human intestine.</title>
        <authorList>
            <person name="Xu J."/>
            <person name="Mahowald M.A."/>
            <person name="Ley R.E."/>
            <person name="Lozupone C.A."/>
            <person name="Hamady M."/>
            <person name="Martens E.C."/>
            <person name="Henrissat B."/>
            <person name="Coutinho P.M."/>
            <person name="Minx P."/>
            <person name="Latreille P."/>
            <person name="Cordum H."/>
            <person name="Van Brunt A."/>
            <person name="Kim K."/>
            <person name="Fulton R.S."/>
            <person name="Fulton L.A."/>
            <person name="Clifton S.W."/>
            <person name="Wilson R.K."/>
            <person name="Knight R.D."/>
            <person name="Gordon J.I."/>
        </authorList>
    </citation>
    <scope>NUCLEOTIDE SEQUENCE [LARGE SCALE GENOMIC DNA]</scope>
    <source>
        <strain>ATCC 8503 / DSM 20701 / CIP 104284 / JCM 5825 / NCTC 11152</strain>
    </source>
</reference>
<dbReference type="EMBL" id="CP000140">
    <property type="protein sequence ID" value="ABR43188.1"/>
    <property type="molecule type" value="Genomic_DNA"/>
</dbReference>
<dbReference type="RefSeq" id="WP_005856219.1">
    <property type="nucleotide sequence ID" value="NZ_LR215978.1"/>
</dbReference>
<dbReference type="SMR" id="A6LBX4"/>
<dbReference type="STRING" id="435591.BDI_1431"/>
<dbReference type="PaxDb" id="435591-BDI_1431"/>
<dbReference type="KEGG" id="pdi:BDI_1431"/>
<dbReference type="eggNOG" id="COG1678">
    <property type="taxonomic scope" value="Bacteria"/>
</dbReference>
<dbReference type="HOGENOM" id="CLU_057596_2_1_10"/>
<dbReference type="BioCyc" id="PDIS435591:G1G5A-1472-MONOMER"/>
<dbReference type="Proteomes" id="UP000000566">
    <property type="component" value="Chromosome"/>
</dbReference>
<dbReference type="GO" id="GO:0005829">
    <property type="term" value="C:cytosol"/>
    <property type="evidence" value="ECO:0007669"/>
    <property type="project" value="TreeGrafter"/>
</dbReference>
<dbReference type="Gene3D" id="3.40.1740.10">
    <property type="entry name" value="VC0467-like"/>
    <property type="match status" value="1"/>
</dbReference>
<dbReference type="HAMAP" id="MF_00758">
    <property type="entry name" value="UPF0301"/>
    <property type="match status" value="1"/>
</dbReference>
<dbReference type="InterPro" id="IPR003774">
    <property type="entry name" value="AlgH-like"/>
</dbReference>
<dbReference type="PANTHER" id="PTHR30327">
    <property type="entry name" value="UNCHARACTERIZED PROTEIN YQGE"/>
    <property type="match status" value="1"/>
</dbReference>
<dbReference type="PANTHER" id="PTHR30327:SF1">
    <property type="entry name" value="UPF0301 PROTEIN YQGE"/>
    <property type="match status" value="1"/>
</dbReference>
<dbReference type="Pfam" id="PF02622">
    <property type="entry name" value="DUF179"/>
    <property type="match status" value="1"/>
</dbReference>
<dbReference type="SUPFAM" id="SSF143456">
    <property type="entry name" value="VC0467-like"/>
    <property type="match status" value="1"/>
</dbReference>